<comment type="function">
    <text evidence="1">Plays an important role in the de novo pathway of purine nucleotide biosynthesis. Catalyzes the first committed step in the biosynthesis of AMP from IMP.</text>
</comment>
<comment type="catalytic activity">
    <reaction evidence="1">
        <text>IMP + L-aspartate + GTP = N(6)-(1,2-dicarboxyethyl)-AMP + GDP + phosphate + 2 H(+)</text>
        <dbReference type="Rhea" id="RHEA:15753"/>
        <dbReference type="ChEBI" id="CHEBI:15378"/>
        <dbReference type="ChEBI" id="CHEBI:29991"/>
        <dbReference type="ChEBI" id="CHEBI:37565"/>
        <dbReference type="ChEBI" id="CHEBI:43474"/>
        <dbReference type="ChEBI" id="CHEBI:57567"/>
        <dbReference type="ChEBI" id="CHEBI:58053"/>
        <dbReference type="ChEBI" id="CHEBI:58189"/>
        <dbReference type="EC" id="6.3.4.4"/>
    </reaction>
</comment>
<comment type="cofactor">
    <cofactor evidence="1">
        <name>Mg(2+)</name>
        <dbReference type="ChEBI" id="CHEBI:18420"/>
    </cofactor>
    <text evidence="1">Binds 1 Mg(2+) ion per subunit.</text>
</comment>
<comment type="pathway">
    <text evidence="1">Purine metabolism; AMP biosynthesis via de novo pathway; AMP from IMP: step 1/2.</text>
</comment>
<comment type="subunit">
    <text evidence="1">Homodimer.</text>
</comment>
<comment type="subcellular location">
    <subcellularLocation>
        <location evidence="1">Cytoplasm</location>
    </subcellularLocation>
</comment>
<comment type="similarity">
    <text evidence="1">Belongs to the adenylosuccinate synthetase family.</text>
</comment>
<name>PURA_WOLWR</name>
<sequence>MNNIVIVGLQWGDEGKGKIVDYLSENADVVVRFQGGNNAGHTIVVDDEVYKLNLLPSAVLRPGKISIIGNGVALDSHALISEIESLKVKGVDVNYNNLMVSESCPLILSVHKDKEKLFEDLNGNHKIGTTNKGIGPCYEDKVGRRAIRLCDLENADELNKRLDTLLNYHNAIRKGLNYQVVKKEEILKEIQEISEKILSYKKPVWKILNDLMKEGKKIIFEGAQGAFLDIDHGTYPFVTSSNTVASQAITGSGLSSNAYIIGVVKAYTTRVGNGPFPTEQKNEVGDSLFTIGKELGTVSNRRRRCGWFDAVLVRQAVQLSGVSSIVLTKLDVLNSFDTIKICTGYKYSGKMYDYLPASHSIQGELEPIYEEFPGWKENTQGKRSIETLPINLIKYIEGLEKLIGVPIHLISTSPKREDVIKLKDF</sequence>
<accession>C0R2U5</accession>
<feature type="chain" id="PRO_1000116492" description="Adenylosuccinate synthetase">
    <location>
        <begin position="1"/>
        <end position="425"/>
    </location>
</feature>
<feature type="active site" description="Proton acceptor" evidence="1">
    <location>
        <position position="13"/>
    </location>
</feature>
<feature type="active site" description="Proton donor" evidence="1">
    <location>
        <position position="41"/>
    </location>
</feature>
<feature type="binding site" evidence="1">
    <location>
        <begin position="12"/>
        <end position="18"/>
    </location>
    <ligand>
        <name>GTP</name>
        <dbReference type="ChEBI" id="CHEBI:37565"/>
    </ligand>
</feature>
<feature type="binding site" description="in other chain" evidence="1">
    <location>
        <begin position="13"/>
        <end position="16"/>
    </location>
    <ligand>
        <name>IMP</name>
        <dbReference type="ChEBI" id="CHEBI:58053"/>
        <note>ligand shared between dimeric partners</note>
    </ligand>
</feature>
<feature type="binding site" evidence="1">
    <location>
        <position position="13"/>
    </location>
    <ligand>
        <name>Mg(2+)</name>
        <dbReference type="ChEBI" id="CHEBI:18420"/>
    </ligand>
</feature>
<feature type="binding site" description="in other chain" evidence="1">
    <location>
        <begin position="38"/>
        <end position="41"/>
    </location>
    <ligand>
        <name>IMP</name>
        <dbReference type="ChEBI" id="CHEBI:58053"/>
        <note>ligand shared between dimeric partners</note>
    </ligand>
</feature>
<feature type="binding site" evidence="1">
    <location>
        <begin position="40"/>
        <end position="42"/>
    </location>
    <ligand>
        <name>GTP</name>
        <dbReference type="ChEBI" id="CHEBI:37565"/>
    </ligand>
</feature>
<feature type="binding site" evidence="1">
    <location>
        <position position="40"/>
    </location>
    <ligand>
        <name>Mg(2+)</name>
        <dbReference type="ChEBI" id="CHEBI:18420"/>
    </ligand>
</feature>
<feature type="binding site" description="in other chain" evidence="1">
    <location>
        <position position="130"/>
    </location>
    <ligand>
        <name>IMP</name>
        <dbReference type="ChEBI" id="CHEBI:58053"/>
        <note>ligand shared between dimeric partners</note>
    </ligand>
</feature>
<feature type="binding site" evidence="1">
    <location>
        <position position="144"/>
    </location>
    <ligand>
        <name>IMP</name>
        <dbReference type="ChEBI" id="CHEBI:58053"/>
        <note>ligand shared between dimeric partners</note>
    </ligand>
</feature>
<feature type="binding site" description="in other chain" evidence="1">
    <location>
        <position position="224"/>
    </location>
    <ligand>
        <name>IMP</name>
        <dbReference type="ChEBI" id="CHEBI:58053"/>
        <note>ligand shared between dimeric partners</note>
    </ligand>
</feature>
<feature type="binding site" description="in other chain" evidence="1">
    <location>
        <position position="239"/>
    </location>
    <ligand>
        <name>IMP</name>
        <dbReference type="ChEBI" id="CHEBI:58053"/>
        <note>ligand shared between dimeric partners</note>
    </ligand>
</feature>
<feature type="binding site" evidence="1">
    <location>
        <begin position="297"/>
        <end position="303"/>
    </location>
    <ligand>
        <name>substrate</name>
    </ligand>
</feature>
<feature type="binding site" description="in other chain" evidence="1">
    <location>
        <position position="301"/>
    </location>
    <ligand>
        <name>IMP</name>
        <dbReference type="ChEBI" id="CHEBI:58053"/>
        <note>ligand shared between dimeric partners</note>
    </ligand>
</feature>
<feature type="binding site" evidence="1">
    <location>
        <position position="303"/>
    </location>
    <ligand>
        <name>GTP</name>
        <dbReference type="ChEBI" id="CHEBI:37565"/>
    </ligand>
</feature>
<feature type="binding site" evidence="1">
    <location>
        <begin position="329"/>
        <end position="331"/>
    </location>
    <ligand>
        <name>GTP</name>
        <dbReference type="ChEBI" id="CHEBI:37565"/>
    </ligand>
</feature>
<feature type="binding site" evidence="1">
    <location>
        <begin position="411"/>
        <end position="413"/>
    </location>
    <ligand>
        <name>GTP</name>
        <dbReference type="ChEBI" id="CHEBI:37565"/>
    </ligand>
</feature>
<organism>
    <name type="scientific">Wolbachia sp. subsp. Drosophila simulans (strain wRi)</name>
    <dbReference type="NCBI Taxonomy" id="66084"/>
    <lineage>
        <taxon>Bacteria</taxon>
        <taxon>Pseudomonadati</taxon>
        <taxon>Pseudomonadota</taxon>
        <taxon>Alphaproteobacteria</taxon>
        <taxon>Rickettsiales</taxon>
        <taxon>Anaplasmataceae</taxon>
        <taxon>Wolbachieae</taxon>
        <taxon>Wolbachia</taxon>
    </lineage>
</organism>
<gene>
    <name evidence="1" type="primary">purA</name>
    <name type="ordered locus">WRi_004490</name>
</gene>
<protein>
    <recommendedName>
        <fullName evidence="1">Adenylosuccinate synthetase</fullName>
        <shortName evidence="1">AMPSase</shortName>
        <shortName evidence="1">AdSS</shortName>
        <ecNumber evidence="1">6.3.4.4</ecNumber>
    </recommendedName>
    <alternativeName>
        <fullName evidence="1">IMP--aspartate ligase</fullName>
    </alternativeName>
</protein>
<proteinExistence type="inferred from homology"/>
<keyword id="KW-0963">Cytoplasm</keyword>
<keyword id="KW-0342">GTP-binding</keyword>
<keyword id="KW-0436">Ligase</keyword>
<keyword id="KW-0460">Magnesium</keyword>
<keyword id="KW-0479">Metal-binding</keyword>
<keyword id="KW-0547">Nucleotide-binding</keyword>
<keyword id="KW-0658">Purine biosynthesis</keyword>
<reference key="1">
    <citation type="journal article" date="2009" name="Proc. Natl. Acad. Sci. U.S.A.">
        <title>The mosaic genome structure of the Wolbachia wRi strain infecting Drosophila simulans.</title>
        <authorList>
            <person name="Klasson L."/>
            <person name="Westberg J."/>
            <person name="Sapountzis P."/>
            <person name="Naeslund K."/>
            <person name="Lutnaes Y."/>
            <person name="Darby A.C."/>
            <person name="Veneti Z."/>
            <person name="Chen L."/>
            <person name="Braig H.R."/>
            <person name="Garrett R."/>
            <person name="Bourtzis K."/>
            <person name="Andersson S.G."/>
        </authorList>
    </citation>
    <scope>NUCLEOTIDE SEQUENCE [LARGE SCALE GENOMIC DNA]</scope>
    <source>
        <strain>wRi</strain>
    </source>
</reference>
<dbReference type="EC" id="6.3.4.4" evidence="1"/>
<dbReference type="EMBL" id="CP001391">
    <property type="protein sequence ID" value="ACN95237.1"/>
    <property type="molecule type" value="Genomic_DNA"/>
</dbReference>
<dbReference type="RefSeq" id="WP_006280265.1">
    <property type="nucleotide sequence ID" value="NZ_MKIF01000191.1"/>
</dbReference>
<dbReference type="SMR" id="C0R2U5"/>
<dbReference type="STRING" id="66084.WRi_004490"/>
<dbReference type="KEGG" id="wri:WRi_004490"/>
<dbReference type="HOGENOM" id="CLU_029848_0_0_5"/>
<dbReference type="UniPathway" id="UPA00075">
    <property type="reaction ID" value="UER00335"/>
</dbReference>
<dbReference type="Proteomes" id="UP000001293">
    <property type="component" value="Chromosome"/>
</dbReference>
<dbReference type="GO" id="GO:0005737">
    <property type="term" value="C:cytoplasm"/>
    <property type="evidence" value="ECO:0007669"/>
    <property type="project" value="UniProtKB-SubCell"/>
</dbReference>
<dbReference type="GO" id="GO:0004019">
    <property type="term" value="F:adenylosuccinate synthase activity"/>
    <property type="evidence" value="ECO:0007669"/>
    <property type="project" value="UniProtKB-UniRule"/>
</dbReference>
<dbReference type="GO" id="GO:0005525">
    <property type="term" value="F:GTP binding"/>
    <property type="evidence" value="ECO:0007669"/>
    <property type="project" value="UniProtKB-UniRule"/>
</dbReference>
<dbReference type="GO" id="GO:0000287">
    <property type="term" value="F:magnesium ion binding"/>
    <property type="evidence" value="ECO:0007669"/>
    <property type="project" value="UniProtKB-UniRule"/>
</dbReference>
<dbReference type="GO" id="GO:0044208">
    <property type="term" value="P:'de novo' AMP biosynthetic process"/>
    <property type="evidence" value="ECO:0007669"/>
    <property type="project" value="UniProtKB-UniRule"/>
</dbReference>
<dbReference type="GO" id="GO:0046040">
    <property type="term" value="P:IMP metabolic process"/>
    <property type="evidence" value="ECO:0007669"/>
    <property type="project" value="TreeGrafter"/>
</dbReference>
<dbReference type="CDD" id="cd03108">
    <property type="entry name" value="AdSS"/>
    <property type="match status" value="1"/>
</dbReference>
<dbReference type="FunFam" id="1.10.300.10:FF:000001">
    <property type="entry name" value="Adenylosuccinate synthetase"/>
    <property type="match status" value="1"/>
</dbReference>
<dbReference type="FunFam" id="3.90.170.10:FF:000001">
    <property type="entry name" value="Adenylosuccinate synthetase"/>
    <property type="match status" value="1"/>
</dbReference>
<dbReference type="Gene3D" id="3.40.440.10">
    <property type="entry name" value="Adenylosuccinate Synthetase, subunit A, domain 1"/>
    <property type="match status" value="1"/>
</dbReference>
<dbReference type="Gene3D" id="1.10.300.10">
    <property type="entry name" value="Adenylosuccinate Synthetase, subunit A, domain 2"/>
    <property type="match status" value="1"/>
</dbReference>
<dbReference type="Gene3D" id="3.90.170.10">
    <property type="entry name" value="Adenylosuccinate Synthetase, subunit A, domain 3"/>
    <property type="match status" value="1"/>
</dbReference>
<dbReference type="HAMAP" id="MF_00011">
    <property type="entry name" value="Adenylosucc_synth"/>
    <property type="match status" value="1"/>
</dbReference>
<dbReference type="InterPro" id="IPR018220">
    <property type="entry name" value="Adenylosuccin_syn_GTP-bd"/>
</dbReference>
<dbReference type="InterPro" id="IPR033128">
    <property type="entry name" value="Adenylosuccin_syn_Lys_AS"/>
</dbReference>
<dbReference type="InterPro" id="IPR042109">
    <property type="entry name" value="Adenylosuccinate_synth_dom1"/>
</dbReference>
<dbReference type="InterPro" id="IPR042110">
    <property type="entry name" value="Adenylosuccinate_synth_dom2"/>
</dbReference>
<dbReference type="InterPro" id="IPR042111">
    <property type="entry name" value="Adenylosuccinate_synth_dom3"/>
</dbReference>
<dbReference type="InterPro" id="IPR001114">
    <property type="entry name" value="Adenylosuccinate_synthetase"/>
</dbReference>
<dbReference type="InterPro" id="IPR027417">
    <property type="entry name" value="P-loop_NTPase"/>
</dbReference>
<dbReference type="NCBIfam" id="NF002223">
    <property type="entry name" value="PRK01117.1"/>
    <property type="match status" value="1"/>
</dbReference>
<dbReference type="NCBIfam" id="TIGR00184">
    <property type="entry name" value="purA"/>
    <property type="match status" value="1"/>
</dbReference>
<dbReference type="PANTHER" id="PTHR11846">
    <property type="entry name" value="ADENYLOSUCCINATE SYNTHETASE"/>
    <property type="match status" value="1"/>
</dbReference>
<dbReference type="PANTHER" id="PTHR11846:SF0">
    <property type="entry name" value="ADENYLOSUCCINATE SYNTHETASE"/>
    <property type="match status" value="1"/>
</dbReference>
<dbReference type="Pfam" id="PF00709">
    <property type="entry name" value="Adenylsucc_synt"/>
    <property type="match status" value="1"/>
</dbReference>
<dbReference type="SMART" id="SM00788">
    <property type="entry name" value="Adenylsucc_synt"/>
    <property type="match status" value="1"/>
</dbReference>
<dbReference type="SUPFAM" id="SSF52540">
    <property type="entry name" value="P-loop containing nucleoside triphosphate hydrolases"/>
    <property type="match status" value="1"/>
</dbReference>
<dbReference type="PROSITE" id="PS01266">
    <property type="entry name" value="ADENYLOSUCCIN_SYN_1"/>
    <property type="match status" value="1"/>
</dbReference>
<dbReference type="PROSITE" id="PS00513">
    <property type="entry name" value="ADENYLOSUCCIN_SYN_2"/>
    <property type="match status" value="1"/>
</dbReference>
<evidence type="ECO:0000255" key="1">
    <source>
        <dbReference type="HAMAP-Rule" id="MF_00011"/>
    </source>
</evidence>